<comment type="function">
    <text evidence="3 6 7">Thiol-specific peroxidase that catalyzes the reduction of hydrogen peroxide and organic hydroperoxides to water and alcohols, respectively. Plays a role in cell protection against oxidative stress by detoxifying peroxides. Together with AhpD, DlaT and Lpd, constitutes an NADH-dependent peroxidase active against hydrogen and alkyl peroxides as well as serving as a peroxynitrite reductase, thus protecting the bacterium against reactive nitrogen intermediates and oxidative stress generated by the host immune system. Does not however seem to play a role in detoxification of isoniazid.</text>
</comment>
<comment type="catalytic activity">
    <reaction evidence="7 8">
        <text>N(6)-[(R)-dihydrolipoyl]-L-lysyl-[lipoyl-carrier protein] + a hydroperoxide = N(6)-[(R)-lipoyl]-L-lysyl-[lipoyl-carrier protein] + an alcohol + H2O</text>
        <dbReference type="Rhea" id="RHEA:62636"/>
        <dbReference type="Rhea" id="RHEA-COMP:10502"/>
        <dbReference type="Rhea" id="RHEA-COMP:16355"/>
        <dbReference type="ChEBI" id="CHEBI:15377"/>
        <dbReference type="ChEBI" id="CHEBI:30879"/>
        <dbReference type="ChEBI" id="CHEBI:35924"/>
        <dbReference type="ChEBI" id="CHEBI:83099"/>
        <dbReference type="ChEBI" id="CHEBI:83100"/>
        <dbReference type="EC" id="1.11.1.28"/>
    </reaction>
</comment>
<comment type="biophysicochemical properties">
    <kinetics>
        <KM evidence="7">5.38 mM for tert-butyl hydroperoxide</KM>
        <KM evidence="8">0.2 uM for tert-butyl hydroperoxide (using AhpD as electron donor)</KM>
        <KM evidence="8">5.1 uM for tert-butyl hydroperoxide (using thioredoxin TrxC as electron donor)</KM>
        <KM evidence="8">65.7 uM for AhpD (using tert-butyl hydroperoxide as substrate)</KM>
        <KM evidence="8">5.6 uM for TrxC (using tert-butyl hydroperoxide as substrate)</KM>
        <text evidence="8">kcat is 0.6 sec(-1) with tert-butyl hydroperoxide as substrate and AhpD as reductant and 0.1 sec(-1) with tert-butyl hydroperoxide as substrate and TrxC as reductant.</text>
    </kinetics>
</comment>
<comment type="subunit">
    <text evidence="4 6 10">Homodimer; disulfide-linked, upon oxidation. 6 homodimers assemble to form a ring-like dodecamer (PubMed:11171096, PubMed:15886207). Identified in a complex with AhpD, DlaT and Lpd (PubMed:11799204).</text>
</comment>
<comment type="subcellular location">
    <subcellularLocation>
        <location evidence="1">Cytoplasm</location>
    </subcellularLocation>
</comment>
<comment type="induction">
    <text evidence="5 11">Induced in isoniazid (INH)-resistant, KatG-deficient strains as well as in INH-sensitive strains when challenged with the drug. Increased expression in these strains probably compensates for loss of katG activity in detoxification of organic peroxides. A possible member of the dormancy regulon. Induced in response to reduced oxygen tension (hypoxia). It is hoped that this regulon will give insight into the latent, or dormant phase of infection.</text>
</comment>
<comment type="miscellaneous">
    <text evidence="8 9 16">The active site is a conserved redox-active cysteine residue, the peroxidatic cysteine (C(P)), which makes the nucleophilic attack on the peroxide substrate. The peroxide oxidizes the C(P)-SH to cysteine sulfenic acid (C(P)-SOH), which then reacts with another cysteine residue, the resolving cysteine (C(R)), to form a disulfide bridge. The disulfide is subsequently reduced by an appropriate electron donor to complete the catalytic cycle. In this typical 2-Cys peroxiredoxin, C(R) is provided by the other dimeric subunit to form an intersubunit disulfide (PubMed:15178486, PubMed:15886207). The disulfide can subsequently be reduced through a mixed disulfide with the C-terminal cysteine of AhpD, resolved by its second cysteine (PubMed:15178486) or by thioredoxin (TrxC) (PubMed:14871480).</text>
</comment>
<comment type="similarity">
    <text evidence="12">Belongs to the peroxiredoxin family. AhpC/Prx1 subfamily.</text>
</comment>
<organism>
    <name type="scientific">Mycobacterium tuberculosis (strain ATCC 25618 / H37Rv)</name>
    <dbReference type="NCBI Taxonomy" id="83332"/>
    <lineage>
        <taxon>Bacteria</taxon>
        <taxon>Bacillati</taxon>
        <taxon>Actinomycetota</taxon>
        <taxon>Actinomycetes</taxon>
        <taxon>Mycobacteriales</taxon>
        <taxon>Mycobacteriaceae</taxon>
        <taxon>Mycobacterium</taxon>
        <taxon>Mycobacterium tuberculosis complex</taxon>
    </lineage>
</organism>
<accession>P9WQB7</accession>
<accession>L0T9L3</accession>
<accession>Q79FE2</accession>
<accession>Q7BHK8</accession>
<accession>Q7D758</accession>
<protein>
    <recommendedName>
        <fullName>Alkyl hydroperoxide reductase C</fullName>
        <shortName>MtAhpC</shortName>
        <ecNumber evidence="7 8">1.11.1.28</ecNumber>
    </recommendedName>
    <alternativeName>
        <fullName>Peroxiredoxin</fullName>
    </alternativeName>
    <alternativeName>
        <fullName>Thioredoxin peroxidase</fullName>
    </alternativeName>
</protein>
<reference key="1">
    <citation type="journal article" date="1995" name="Proc. Natl. Acad. Sci. U.S.A.">
        <title>Disparate responses to oxidative stress in saprophytic and pathogenic mycobacteria.</title>
        <authorList>
            <person name="Sherman D.R."/>
            <person name="Sabo P.J."/>
            <person name="Hickey M.J."/>
            <person name="Arain T.M."/>
            <person name="Mahairas G.G."/>
            <person name="Yuan Y."/>
            <person name="Barry C.E. III"/>
            <person name="Stover C.K."/>
        </authorList>
    </citation>
    <scope>NUCLEOTIDE SEQUENCE [GENOMIC DNA]</scope>
</reference>
<reference key="2">
    <citation type="journal article" date="1995" name="Mol. Microbiol.">
        <title>Mycobacterium tuberculosis is a natural mutant with an inactivated oxidative-stress regulatory gene: implications for sensitivity to isoniazid.</title>
        <authorList>
            <person name="Deretic V."/>
            <person name="Philipp W."/>
            <person name="Dhandayuthapani S."/>
            <person name="Mudd M.H."/>
            <person name="Curcic R."/>
            <person name="Garbe T."/>
            <person name="Heym B."/>
            <person name="Via L.E."/>
            <person name="Cole S.T."/>
        </authorList>
    </citation>
    <scope>NUCLEOTIDE SEQUENCE [GENOMIC DNA]</scope>
    <source>
        <strain>ATCC 25618 / H37Rv</strain>
    </source>
</reference>
<reference key="3">
    <citation type="submission" date="2000-10" db="EMBL/GenBank/DDBJ databases">
        <title>Mutation associated with isoniazid resistance in Italian isolates of Mycobacterium tuberculosis.</title>
        <authorList>
            <person name="Orru G."/>
            <person name="Iona E."/>
            <person name="Memmi G."/>
            <person name="Oggioni M.R."/>
            <person name="Fattorini L."/>
            <person name="Orefici G."/>
            <person name="Pozzi G."/>
        </authorList>
    </citation>
    <scope>NUCLEOTIDE SEQUENCE [GENOMIC DNA]</scope>
    <source>
        <strain>An01</strain>
        <strain>F07</strain>
        <strain>Rm23</strain>
        <strain>Rm24</strain>
        <strain>Rm30</strain>
    </source>
</reference>
<reference key="4">
    <citation type="journal article" date="1998" name="Nature">
        <title>Deciphering the biology of Mycobacterium tuberculosis from the complete genome sequence.</title>
        <authorList>
            <person name="Cole S.T."/>
            <person name="Brosch R."/>
            <person name="Parkhill J."/>
            <person name="Garnier T."/>
            <person name="Churcher C.M."/>
            <person name="Harris D.E."/>
            <person name="Gordon S.V."/>
            <person name="Eiglmeier K."/>
            <person name="Gas S."/>
            <person name="Barry C.E. III"/>
            <person name="Tekaia F."/>
            <person name="Badcock K."/>
            <person name="Basham D."/>
            <person name="Brown D."/>
            <person name="Chillingworth T."/>
            <person name="Connor R."/>
            <person name="Davies R.M."/>
            <person name="Devlin K."/>
            <person name="Feltwell T."/>
            <person name="Gentles S."/>
            <person name="Hamlin N."/>
            <person name="Holroyd S."/>
            <person name="Hornsby T."/>
            <person name="Jagels K."/>
            <person name="Krogh A."/>
            <person name="McLean J."/>
            <person name="Moule S."/>
            <person name="Murphy L.D."/>
            <person name="Oliver S."/>
            <person name="Osborne J."/>
            <person name="Quail M.A."/>
            <person name="Rajandream M.A."/>
            <person name="Rogers J."/>
            <person name="Rutter S."/>
            <person name="Seeger K."/>
            <person name="Skelton S."/>
            <person name="Squares S."/>
            <person name="Squares R."/>
            <person name="Sulston J.E."/>
            <person name="Taylor K."/>
            <person name="Whitehead S."/>
            <person name="Barrell B.G."/>
        </authorList>
    </citation>
    <scope>NUCLEOTIDE SEQUENCE [LARGE SCALE GENOMIC DNA]</scope>
    <source>
        <strain>ATCC 25618 / H37Rv</strain>
    </source>
</reference>
<reference key="5">
    <citation type="journal article" date="1996" name="Science">
        <title>Compensatory ahpC gene expression in isoniazid-resistant Mycobacterium tuberculosis.</title>
        <authorList>
            <person name="Sherman D.R."/>
            <person name="Mdluli K."/>
            <person name="Hickey M.J."/>
            <person name="Arain T.M."/>
            <person name="Morris S.L."/>
            <person name="Barry C.E. III"/>
            <person name="Stover C.K."/>
        </authorList>
    </citation>
    <scope>PROTEIN SEQUENCE OF 2-16</scope>
    <scope>LACK OF ACTION ON ISONIAZID</scope>
    <scope>INDUCTION IN DRUG-RESISTANT BACTERIA</scope>
    <source>
        <strain>ATCC 35822</strain>
    </source>
</reference>
<reference key="6">
    <citation type="journal article" date="2000" name="J. Biol. Chem.">
        <title>The AhpC and AhpD antioxidant defense system of Mycobacterium tuberculosis.</title>
        <authorList>
            <person name="Hillas P.J."/>
            <person name="del Alba F.S."/>
            <person name="Oyarzabal J."/>
            <person name="Wilks A."/>
            <person name="Ortiz De Montellano P.R."/>
        </authorList>
    </citation>
    <scope>FUNCTION</scope>
    <scope>MUTAGENESIS OF CYS-61; CYS-174 AND CYS-176</scope>
    <scope>DISULFIDE BOND</scope>
</reference>
<reference key="7">
    <citation type="journal article" date="2001" name="Biochem. J.">
        <title>Characterization of the Mycobacterium tuberculosis H37Rv alkyl hydroperoxidase AhpC points to the importance of ionic interactions in oligomerization and activity.</title>
        <authorList>
            <person name="Chauhan R."/>
            <person name="Mande S.C."/>
        </authorList>
    </citation>
    <scope>SUBUNIT</scope>
</reference>
<reference key="8">
    <citation type="journal article" date="2001" name="Proc. Natl. Acad. Sci. U.S.A.">
        <title>Regulation of the Mycobacterium tuberculosis hypoxic response gene encoding alpha -crystallin.</title>
        <authorList>
            <person name="Sherman D.R."/>
            <person name="Voskuil M."/>
            <person name="Schnappinger D."/>
            <person name="Liao R."/>
            <person name="Harrell M.I."/>
            <person name="Schoolnik G.K."/>
        </authorList>
    </citation>
    <scope>INDUCTION BY HYPOXIA</scope>
    <source>
        <strain>ATCC 25618 / H37Rv</strain>
    </source>
</reference>
<reference key="9">
    <citation type="journal article" date="2002" name="Biochem. J.">
        <title>Site-directed mutagenesis reveals a novel catalytic mechanism of Mycobacterium tuberculosis alkylhydroperoxidase C.</title>
        <authorList>
            <person name="Chauhan R."/>
            <person name="Mande S.C."/>
        </authorList>
    </citation>
    <scope>BIOPHYSICOCHEMICAL PROPERTIES</scope>
    <scope>SUBUNIT</scope>
    <scope>FUNCTION AS ANTIOXIDANT</scope>
    <scope>MUTAGENESIS OF CYS-61; CYS-174; CYS-176 AND 174-CYS--CYS-176</scope>
    <scope>DISULFIDE BOND</scope>
</reference>
<reference key="10">
    <citation type="journal article" date="2002" name="Science">
        <title>Metabolic enzymes of mycobacteria linked to antioxidant defense by a thioredoxin-like protein.</title>
        <authorList>
            <person name="Bryk R."/>
            <person name="Lima C.D."/>
            <person name="Erdjument-Bromage H."/>
            <person name="Tempst P."/>
            <person name="Nathan C."/>
        </authorList>
    </citation>
    <scope>FUNCTION</scope>
    <scope>SUBUNIT</scope>
    <source>
        <strain>ATCC 25618 / H37Rv</strain>
    </source>
</reference>
<reference key="11">
    <citation type="journal article" date="2004" name="Arch. Biochem. Biophys.">
        <title>Multiple thioredoxin-mediated routes to detoxify hydroperoxides in Mycobacterium tuberculosis.</title>
        <authorList>
            <person name="Jaeger T."/>
            <person name="Budde H."/>
            <person name="Flohe L."/>
            <person name="Menge U."/>
            <person name="Singh M."/>
            <person name="Trujillo M."/>
            <person name="Radi R."/>
        </authorList>
    </citation>
    <scope>FUNCTION</scope>
    <scope>CATALYTIC ACTIVITY</scope>
    <scope>BIOPHYSICOCHEMICAL PROPERTIES</scope>
</reference>
<reference key="12">
    <citation type="journal article" date="2004" name="Arch. Biochem. Biophys.">
        <title>Intermolecular interactions in the AhpC/AhpD antioxidant defense system of Mycobacterium tuberculosis.</title>
        <authorList>
            <person name="Koshkin A."/>
            <person name="Knudsen G.M."/>
            <person name="Ortiz De Montellano P.R."/>
        </authorList>
    </citation>
    <scope>MUTAGENESIS OF CYS-61; CYS-174 AND CYS-176</scope>
    <scope>DISULFIDE BOND</scope>
</reference>
<reference key="13">
    <citation type="journal article" date="2011" name="Mol. Cell. Proteomics">
        <title>Proteogenomic analysis of Mycobacterium tuberculosis by high resolution mass spectrometry.</title>
        <authorList>
            <person name="Kelkar D.S."/>
            <person name="Kumar D."/>
            <person name="Kumar P."/>
            <person name="Balakrishnan L."/>
            <person name="Muthusamy B."/>
            <person name="Yadav A.K."/>
            <person name="Shrivastava P."/>
            <person name="Marimuthu A."/>
            <person name="Anand S."/>
            <person name="Sundaram H."/>
            <person name="Kingsbury R."/>
            <person name="Harsha H.C."/>
            <person name="Nair B."/>
            <person name="Prasad T.S."/>
            <person name="Chauhan D.S."/>
            <person name="Katoch K."/>
            <person name="Katoch V.M."/>
            <person name="Kumar P."/>
            <person name="Chaerkady R."/>
            <person name="Ramachandran S."/>
            <person name="Dash D."/>
            <person name="Pandey A."/>
        </authorList>
    </citation>
    <scope>IDENTIFICATION BY MASS SPECTROMETRY [LARGE SCALE ANALYSIS]</scope>
    <source>
        <strain>ATCC 25618 / H37Rv</strain>
    </source>
</reference>
<reference key="14">
    <citation type="journal article" date="2005" name="J. Biol. Chem.">
        <title>Structure and mechanism of the alkyl hydroperoxidase AhpC, a key element of the Mycobacterium tuberculosis defense system against oxidative stress.</title>
        <authorList>
            <person name="Guimaraes B.G."/>
            <person name="Souchon H."/>
            <person name="Honore N."/>
            <person name="Saint-Joanis B."/>
            <person name="Brosch R."/>
            <person name="Shepard W."/>
            <person name="Cole S.T."/>
            <person name="Alzari P.M."/>
        </authorList>
    </citation>
    <scope>X-RAY CRYSTALLOGRAPHY (2.4 ANGSTROMS) OF MUTANT SER-176</scope>
    <scope>DISULFIDE BONDS</scope>
    <scope>POSSIBLE CATALYTIC MECHANISM</scope>
    <scope>SUBUNIT</scope>
</reference>
<feature type="initiator methionine" description="Removed" evidence="11">
    <location>
        <position position="1"/>
    </location>
</feature>
<feature type="chain" id="PRO_0000392913" description="Alkyl hydroperoxide reductase C">
    <location>
        <begin position="2"/>
        <end position="195"/>
    </location>
</feature>
<feature type="domain" description="Thioredoxin" evidence="2">
    <location>
        <begin position="4"/>
        <end position="170"/>
    </location>
</feature>
<feature type="active site" description="Cysteine sulfenic acid (-SOH) intermediate" evidence="13 14 15">
    <location>
        <position position="61"/>
    </location>
</feature>
<feature type="disulfide bond" description="Interchain (with C-133 in AhpD); transient" evidence="9">
    <location>
        <position position="61"/>
    </location>
</feature>
<feature type="disulfide bond" description="Interchain (with C-174); in linked form" evidence="3 9 10 17">
    <location>
        <position position="61"/>
    </location>
</feature>
<feature type="disulfide bond" description="Interchain (with C-61); in linked form" evidence="3 9 10 17">
    <location>
        <position position="174"/>
    </location>
</feature>
<feature type="mutagenesis site" description="No enzyme activity." evidence="3 7 9">
    <original>C</original>
    <variation>A</variation>
    <variation>S</variation>
    <location>
        <position position="61"/>
    </location>
</feature>
<feature type="mutagenesis site" description="50% reduction in oxidation activity of dithiothreitol and 60% reduction in oxidation of thiocyanate." evidence="7">
    <original>CAC</original>
    <variation>AAA</variation>
    <location>
        <begin position="174"/>
        <end position="176"/>
    </location>
</feature>
<feature type="mutagenesis site" description="Very poor oxidation activity of dithiothreitol and thiocyanate." evidence="3 7 9">
    <original>C</original>
    <variation>A</variation>
    <location>
        <position position="174"/>
    </location>
</feature>
<feature type="mutagenesis site" description="In reconstituted in vitro system retains no enzyme activity." evidence="3 7 9">
    <original>C</original>
    <variation>S</variation>
    <location>
        <position position="174"/>
    </location>
</feature>
<feature type="mutagenesis site" description="50% reduction in oxidation activity of dithiothreitol and thiocyanate." evidence="3 7 9">
    <original>C</original>
    <variation>A</variation>
    <location>
        <position position="176"/>
    </location>
</feature>
<feature type="mutagenesis site" description="Retains about 10% activity with tert-butylhydroperoxide. In reconstituted in vitro system retains 30% enzyme activity." evidence="3 7 9">
    <original>C</original>
    <variation>S</variation>
    <location>
        <position position="176"/>
    </location>
</feature>
<feature type="strand" evidence="18">
    <location>
        <begin position="14"/>
        <end position="18"/>
    </location>
</feature>
<feature type="helix" evidence="18">
    <location>
        <begin position="23"/>
        <end position="25"/>
    </location>
</feature>
<feature type="helix" evidence="18">
    <location>
        <begin position="31"/>
        <end position="34"/>
    </location>
</feature>
<feature type="strand" evidence="18">
    <location>
        <begin position="35"/>
        <end position="39"/>
    </location>
</feature>
<feature type="strand" evidence="18">
    <location>
        <begin position="47"/>
        <end position="52"/>
    </location>
</feature>
<feature type="helix" evidence="18">
    <location>
        <begin position="62"/>
        <end position="70"/>
    </location>
</feature>
<feature type="helix" evidence="18">
    <location>
        <begin position="72"/>
        <end position="76"/>
    </location>
</feature>
<feature type="turn" evidence="18">
    <location>
        <begin position="77"/>
        <end position="79"/>
    </location>
</feature>
<feature type="strand" evidence="18">
    <location>
        <begin position="80"/>
        <end position="88"/>
    </location>
</feature>
<feature type="helix" evidence="18">
    <location>
        <begin position="90"/>
        <end position="99"/>
    </location>
</feature>
<feature type="helix" evidence="18">
    <location>
        <begin position="103"/>
        <end position="105"/>
    </location>
</feature>
<feature type="strand" evidence="18">
    <location>
        <begin position="110"/>
        <end position="112"/>
    </location>
</feature>
<feature type="helix" evidence="18">
    <location>
        <begin position="117"/>
        <end position="121"/>
    </location>
</feature>
<feature type="strand" evidence="18">
    <location>
        <begin position="129"/>
        <end position="131"/>
    </location>
</feature>
<feature type="strand" evidence="18">
    <location>
        <begin position="133"/>
        <end position="138"/>
    </location>
</feature>
<feature type="strand" evidence="18">
    <location>
        <begin position="142"/>
        <end position="150"/>
    </location>
</feature>
<feature type="helix" evidence="18">
    <location>
        <begin position="158"/>
        <end position="169"/>
    </location>
</feature>
<feature type="helix" evidence="18">
    <location>
        <begin position="175"/>
        <end position="177"/>
    </location>
</feature>
<sequence length="195" mass="21566">MPLLTIGDQFPAYQLTALIGGDLSKVDAKQPGDYFTTITSDEHPGKWRVVFFWPKDFTFVCPTEIAAFSKLNDEFEDRDAQILGVSIDSEFAHFQWRAQHNDLKTLPFPMLSDIKRELSQAAGVLNADGVADRVTFIVDPNNEIQFVSATAGSVGRNVDEVLRVLDALQSDELCACNWRKGDPTLDAGELLKASA</sequence>
<name>AHPC_MYCTU</name>
<evidence type="ECO:0000250" key="1">
    <source>
        <dbReference type="UniProtKB" id="P0AE08"/>
    </source>
</evidence>
<evidence type="ECO:0000255" key="2">
    <source>
        <dbReference type="PROSITE-ProRule" id="PRU00691"/>
    </source>
</evidence>
<evidence type="ECO:0000269" key="3">
    <source>
    </source>
</evidence>
<evidence type="ECO:0000269" key="4">
    <source>
    </source>
</evidence>
<evidence type="ECO:0000269" key="5">
    <source>
    </source>
</evidence>
<evidence type="ECO:0000269" key="6">
    <source>
    </source>
</evidence>
<evidence type="ECO:0000269" key="7">
    <source>
    </source>
</evidence>
<evidence type="ECO:0000269" key="8">
    <source>
    </source>
</evidence>
<evidence type="ECO:0000269" key="9">
    <source>
    </source>
</evidence>
<evidence type="ECO:0000269" key="10">
    <source>
    </source>
</evidence>
<evidence type="ECO:0000269" key="11">
    <source>
    </source>
</evidence>
<evidence type="ECO:0000305" key="12"/>
<evidence type="ECO:0000305" key="13">
    <source>
    </source>
</evidence>
<evidence type="ECO:0000305" key="14">
    <source>
    </source>
</evidence>
<evidence type="ECO:0000305" key="15">
    <source>
    </source>
</evidence>
<evidence type="ECO:0000305" key="16">
    <source>
    </source>
</evidence>
<evidence type="ECO:0007744" key="17">
    <source>
        <dbReference type="PDB" id="2BMX"/>
    </source>
</evidence>
<evidence type="ECO:0007829" key="18">
    <source>
        <dbReference type="PDB" id="2BMX"/>
    </source>
</evidence>
<proteinExistence type="evidence at protein level"/>
<gene>
    <name type="primary">ahpC</name>
    <name type="ordered locus">Rv2428</name>
</gene>
<keyword id="KW-0002">3D-structure</keyword>
<keyword id="KW-0049">Antioxidant</keyword>
<keyword id="KW-0963">Cytoplasm</keyword>
<keyword id="KW-0903">Direct protein sequencing</keyword>
<keyword id="KW-1015">Disulfide bond</keyword>
<keyword id="KW-0560">Oxidoreductase</keyword>
<keyword id="KW-0575">Peroxidase</keyword>
<keyword id="KW-0676">Redox-active center</keyword>
<keyword id="KW-1185">Reference proteome</keyword>
<keyword id="KW-0346">Stress response</keyword>
<dbReference type="EC" id="1.11.1.28" evidence="7 8"/>
<dbReference type="EMBL" id="U18264">
    <property type="protein sequence ID" value="AAA79919.1"/>
    <property type="molecule type" value="Genomic_DNA"/>
</dbReference>
<dbReference type="EMBL" id="U16243">
    <property type="protein sequence ID" value="AAC43585.1"/>
    <property type="molecule type" value="Genomic_DNA"/>
</dbReference>
<dbReference type="EMBL" id="AF313459">
    <property type="protein sequence ID" value="AAG34172.1"/>
    <property type="molecule type" value="Genomic_DNA"/>
</dbReference>
<dbReference type="EMBL" id="AF313460">
    <property type="protein sequence ID" value="AAG34173.1"/>
    <property type="molecule type" value="Genomic_DNA"/>
</dbReference>
<dbReference type="EMBL" id="AF313461">
    <property type="protein sequence ID" value="AAG34174.1"/>
    <property type="molecule type" value="Genomic_DNA"/>
</dbReference>
<dbReference type="EMBL" id="AF313462">
    <property type="protein sequence ID" value="AAG34175.1"/>
    <property type="molecule type" value="Genomic_DNA"/>
</dbReference>
<dbReference type="EMBL" id="AF313463">
    <property type="protein sequence ID" value="AAG34176.1"/>
    <property type="molecule type" value="Genomic_DNA"/>
</dbReference>
<dbReference type="EMBL" id="AL123456">
    <property type="protein sequence ID" value="CCP45220.1"/>
    <property type="molecule type" value="Genomic_DNA"/>
</dbReference>
<dbReference type="RefSeq" id="NP_216944.1">
    <property type="nucleotide sequence ID" value="NC_000962.3"/>
</dbReference>
<dbReference type="RefSeq" id="WP_003412529.1">
    <property type="nucleotide sequence ID" value="NZ_NVQJ01000024.1"/>
</dbReference>
<dbReference type="PDB" id="2BMX">
    <property type="method" value="X-ray"/>
    <property type="resolution" value="2.40 A"/>
    <property type="chains" value="A/B/C=1-195"/>
</dbReference>
<dbReference type="PDBsum" id="2BMX"/>
<dbReference type="SMR" id="P9WQB7"/>
<dbReference type="FunCoup" id="P9WQB7">
    <property type="interactions" value="348"/>
</dbReference>
<dbReference type="STRING" id="83332.Rv2428"/>
<dbReference type="PaxDb" id="83332-Rv2428"/>
<dbReference type="DNASU" id="885717"/>
<dbReference type="GeneID" id="45426418"/>
<dbReference type="GeneID" id="885717"/>
<dbReference type="KEGG" id="mtu:Rv2428"/>
<dbReference type="KEGG" id="mtv:RVBD_2428"/>
<dbReference type="PATRIC" id="fig|83332.111.peg.2715"/>
<dbReference type="TubercuList" id="Rv2428"/>
<dbReference type="eggNOG" id="COG0450">
    <property type="taxonomic scope" value="Bacteria"/>
</dbReference>
<dbReference type="InParanoid" id="P9WQB7"/>
<dbReference type="OrthoDB" id="9812811at2"/>
<dbReference type="PhylomeDB" id="P9WQB7"/>
<dbReference type="BRENDA" id="1.11.1.28">
    <property type="organism ID" value="3445"/>
</dbReference>
<dbReference type="Reactome" id="R-HSA-1222387">
    <property type="pathway name" value="Tolerance of reactive oxygen produced by macrophages"/>
</dbReference>
<dbReference type="Reactome" id="R-HSA-1222538">
    <property type="pathway name" value="Tolerance by Mtb to nitric oxide produced by macrophages"/>
</dbReference>
<dbReference type="Reactome" id="R-HSA-1222541">
    <property type="pathway name" value="Cell redox homeostasis"/>
</dbReference>
<dbReference type="EvolutionaryTrace" id="P9WQB7"/>
<dbReference type="Proteomes" id="UP000001584">
    <property type="component" value="Chromosome"/>
</dbReference>
<dbReference type="GO" id="GO:0005829">
    <property type="term" value="C:cytosol"/>
    <property type="evidence" value="ECO:0000318"/>
    <property type="project" value="GO_Central"/>
</dbReference>
<dbReference type="GO" id="GO:0009274">
    <property type="term" value="C:peptidoglycan-based cell wall"/>
    <property type="evidence" value="ECO:0007005"/>
    <property type="project" value="MTBBASE"/>
</dbReference>
<dbReference type="GO" id="GO:0005886">
    <property type="term" value="C:plasma membrane"/>
    <property type="evidence" value="ECO:0007005"/>
    <property type="project" value="MTBBASE"/>
</dbReference>
<dbReference type="GO" id="GO:0032843">
    <property type="term" value="F:hydroperoxide reductase activity"/>
    <property type="evidence" value="ECO:0000314"/>
    <property type="project" value="MTBBASE"/>
</dbReference>
<dbReference type="GO" id="GO:0102039">
    <property type="term" value="F:NADH-dependent peroxiredoxin activity"/>
    <property type="evidence" value="ECO:0000314"/>
    <property type="project" value="MTBBASE"/>
</dbReference>
<dbReference type="GO" id="GO:0016491">
    <property type="term" value="F:oxidoreductase activity"/>
    <property type="evidence" value="ECO:0000314"/>
    <property type="project" value="MTBBASE"/>
</dbReference>
<dbReference type="GO" id="GO:0004601">
    <property type="term" value="F:peroxidase activity"/>
    <property type="evidence" value="ECO:0000314"/>
    <property type="project" value="MTBBASE"/>
</dbReference>
<dbReference type="GO" id="GO:0051920">
    <property type="term" value="F:peroxiredoxin activity"/>
    <property type="evidence" value="ECO:0000314"/>
    <property type="project" value="MTBBASE"/>
</dbReference>
<dbReference type="GO" id="GO:0008379">
    <property type="term" value="F:thioredoxin peroxidase activity"/>
    <property type="evidence" value="ECO:0000318"/>
    <property type="project" value="GO_Central"/>
</dbReference>
<dbReference type="GO" id="GO:0045454">
    <property type="term" value="P:cell redox homeostasis"/>
    <property type="evidence" value="ECO:0000314"/>
    <property type="project" value="MTBBASE"/>
</dbReference>
<dbReference type="GO" id="GO:0042744">
    <property type="term" value="P:hydrogen peroxide catabolic process"/>
    <property type="evidence" value="ECO:0000318"/>
    <property type="project" value="GO_Central"/>
</dbReference>
<dbReference type="GO" id="GO:0051409">
    <property type="term" value="P:response to nitrosative stress"/>
    <property type="evidence" value="ECO:0000315"/>
    <property type="project" value="MTBBASE"/>
</dbReference>
<dbReference type="GO" id="GO:0006979">
    <property type="term" value="P:response to oxidative stress"/>
    <property type="evidence" value="ECO:0000318"/>
    <property type="project" value="GO_Central"/>
</dbReference>
<dbReference type="CDD" id="cd03015">
    <property type="entry name" value="PRX_Typ2cys"/>
    <property type="match status" value="1"/>
</dbReference>
<dbReference type="FunFam" id="3.40.30.10:FF:000043">
    <property type="entry name" value="Alkyl hydroperoxide reductase C"/>
    <property type="match status" value="1"/>
</dbReference>
<dbReference type="Gene3D" id="3.40.30.10">
    <property type="entry name" value="Glutaredoxin"/>
    <property type="match status" value="1"/>
</dbReference>
<dbReference type="InterPro" id="IPR000866">
    <property type="entry name" value="AhpC/TSA"/>
</dbReference>
<dbReference type="InterPro" id="IPR050217">
    <property type="entry name" value="Peroxiredoxin"/>
</dbReference>
<dbReference type="InterPro" id="IPR024706">
    <property type="entry name" value="Peroxiredoxin_AhpC-typ"/>
</dbReference>
<dbReference type="InterPro" id="IPR036249">
    <property type="entry name" value="Thioredoxin-like_sf"/>
</dbReference>
<dbReference type="InterPro" id="IPR013766">
    <property type="entry name" value="Thioredoxin_domain"/>
</dbReference>
<dbReference type="PANTHER" id="PTHR10681:SF121">
    <property type="entry name" value="ALKYL HYDROPEROXIDE REDUCTASE C"/>
    <property type="match status" value="1"/>
</dbReference>
<dbReference type="PANTHER" id="PTHR10681">
    <property type="entry name" value="THIOREDOXIN PEROXIDASE"/>
    <property type="match status" value="1"/>
</dbReference>
<dbReference type="Pfam" id="PF00578">
    <property type="entry name" value="AhpC-TSA"/>
    <property type="match status" value="1"/>
</dbReference>
<dbReference type="PIRSF" id="PIRSF000239">
    <property type="entry name" value="AHPC"/>
    <property type="match status" value="1"/>
</dbReference>
<dbReference type="SUPFAM" id="SSF52833">
    <property type="entry name" value="Thioredoxin-like"/>
    <property type="match status" value="1"/>
</dbReference>
<dbReference type="PROSITE" id="PS51352">
    <property type="entry name" value="THIOREDOXIN_2"/>
    <property type="match status" value="1"/>
</dbReference>